<comment type="function">
    <text evidence="1">Has bactericidal activity against various Gram-negative Campylobacter, and the Gram-positive L.monocytogenes and B.subtilis. In vitro, inhibits C.jejuni strain ATCC 33560 (MIC=27.3 ug/ml).</text>
</comment>
<comment type="biophysicochemical properties">
    <phDependence>
        <text evidence="1">Stable between pH 4.0 and pH 8.0.</text>
    </phDependence>
    <temperatureDependence>
        <text evidence="1">Thermostable. Retains 100% activity after incubation at 60 degrees Celsius for 60 minutes and 15% after incubation at 121 degrees Celsius for 15 minutes.</text>
    </temperatureDependence>
</comment>
<comment type="subcellular location">
    <subcellularLocation>
        <location evidence="1">Secreted</location>
    </subcellularLocation>
</comment>
<comment type="mass spectrometry" mass="4448.09" method="MALDI" evidence="1"/>
<comment type="miscellaneous">
    <text evidence="1">Antimicrobial activity is lost upon treatment with proteinase K, pronase, pepsin, trypsin, chymotrypsin and papain, but not when treated with catalase, lysozyme or lipase.</text>
</comment>
<comment type="similarity">
    <text evidence="3">Belongs to the bacteriocin class IIA/YGNGV family.</text>
</comment>
<evidence type="ECO:0000269" key="1">
    <source>
    </source>
</evidence>
<evidence type="ECO:0000303" key="2">
    <source>
    </source>
</evidence>
<evidence type="ECO:0000305" key="3"/>
<organism evidence="2">
    <name type="scientific">Latilactobacillus curvatus</name>
    <name type="common">Lactobacillus curvatus</name>
    <dbReference type="NCBI Taxonomy" id="28038"/>
    <lineage>
        <taxon>Bacteria</taxon>
        <taxon>Bacillati</taxon>
        <taxon>Bacillota</taxon>
        <taxon>Bacilli</taxon>
        <taxon>Lactobacillales</taxon>
        <taxon>Lactobacillaceae</taxon>
        <taxon>Latilactobacillus</taxon>
    </lineage>
</organism>
<feature type="chain" id="PRO_0000438928" description="Bacteriocin curvaticin DN317" evidence="1">
    <location>
        <begin position="1"/>
        <end position="47"/>
    </location>
</feature>
<proteinExistence type="evidence at protein level"/>
<accession>C0HK82</accession>
<dbReference type="GO" id="GO:0005576">
    <property type="term" value="C:extracellular region"/>
    <property type="evidence" value="ECO:0007669"/>
    <property type="project" value="UniProtKB-SubCell"/>
</dbReference>
<dbReference type="GO" id="GO:0042742">
    <property type="term" value="P:defense response to bacterium"/>
    <property type="evidence" value="ECO:0007669"/>
    <property type="project" value="UniProtKB-KW"/>
</dbReference>
<dbReference type="GO" id="GO:0031640">
    <property type="term" value="P:killing of cells of another organism"/>
    <property type="evidence" value="ECO:0007669"/>
    <property type="project" value="UniProtKB-KW"/>
</dbReference>
<reference evidence="3" key="1">
    <citation type="journal article" date="2016" name="Probiotics Antimicrob. Proteins">
        <title>Purification and Characterization of a Novel Anti-Campylobacter Bacteriocin Produced by Lactobacillus curvatus DN317.</title>
        <authorList>
            <person name="Zommiti M."/>
            <person name="Almohammed H."/>
            <person name="Ferchichi M."/>
        </authorList>
    </citation>
    <scope>PROTEIN SEQUENCE</scope>
    <scope>FUNCTION</scope>
    <scope>BIOPHYSICOCHEMICAL PROPERTIES</scope>
    <scope>SUBCELLULAR LOCATION</scope>
    <scope>MASS SPECTROMETRY</scope>
    <source>
        <strain evidence="2">DN317</strain>
    </source>
</reference>
<keyword id="KW-0044">Antibiotic</keyword>
<keyword id="KW-0929">Antimicrobial</keyword>
<keyword id="KW-0078">Bacteriocin</keyword>
<keyword id="KW-0903">Direct protein sequencing</keyword>
<keyword id="KW-0964">Secreted</keyword>
<name>CU317_LATCU</name>
<protein>
    <recommendedName>
        <fullName evidence="2">Bacteriocin curvaticin DN317</fullName>
    </recommendedName>
</protein>
<sequence length="47" mass="4448">IPYGGNGVHHGKAGDSXTVDTAIGNIGNNAASIIGGMISGWASGLAG</sequence>